<accession>P0CJ02</accession>
<dbReference type="EMBL" id="GT028582">
    <property type="status" value="NOT_ANNOTATED_CDS"/>
    <property type="molecule type" value="mRNA"/>
</dbReference>
<dbReference type="SMR" id="P0CJ02"/>
<dbReference type="GO" id="GO:0005576">
    <property type="term" value="C:extracellular region"/>
    <property type="evidence" value="ECO:0007669"/>
    <property type="project" value="UniProtKB-SubCell"/>
</dbReference>
<evidence type="ECO:0000250" key="1"/>
<evidence type="ECO:0000255" key="2"/>
<evidence type="ECO:0000305" key="3"/>
<protein>
    <recommendedName>
        <fullName>Venom protein 4.1</fullName>
    </recommendedName>
</protein>
<proteinExistence type="inferred from homology"/>
<comment type="subcellular location">
    <subcellularLocation>
        <location evidence="1">Secreted</location>
    </subcellularLocation>
</comment>
<comment type="tissue specificity">
    <text evidence="3">Expressed by the venom gland.</text>
</comment>
<comment type="similarity">
    <text evidence="3">Belongs to the non-disulfide-bridged peptide (NDBP) superfamily.</text>
</comment>
<organism>
    <name type="scientific">Lychas mucronatus</name>
    <name type="common">Chinese swimming scorpion</name>
    <dbReference type="NCBI Taxonomy" id="172552"/>
    <lineage>
        <taxon>Eukaryota</taxon>
        <taxon>Metazoa</taxon>
        <taxon>Ecdysozoa</taxon>
        <taxon>Arthropoda</taxon>
        <taxon>Chelicerata</taxon>
        <taxon>Arachnida</taxon>
        <taxon>Scorpiones</taxon>
        <taxon>Buthida</taxon>
        <taxon>Buthoidea</taxon>
        <taxon>Buthidae</taxon>
        <taxon>Lychas</taxon>
    </lineage>
</organism>
<feature type="signal peptide" evidence="2">
    <location>
        <begin position="1"/>
        <end position="26"/>
    </location>
</feature>
<feature type="chain" id="PRO_0000403893" description="Venom protein 4.1">
    <location>
        <begin position="27"/>
        <end position="60"/>
    </location>
</feature>
<keyword id="KW-0964">Secreted</keyword>
<keyword id="KW-0732">Signal</keyword>
<name>NDBL_LYCMC</name>
<sequence>MKALCAILLVLFACSVMFEHFSISTAEKVLQNPLSELKRNCEKADCRRSLPQNKQHDFKE</sequence>
<reference key="1">
    <citation type="journal article" date="2010" name="BMC Genomics">
        <title>Comparative venom gland transcriptome analysis of the scorpion Lychas mucronatus reveals intraspecific toxic gene diversity and new venomous components.</title>
        <authorList>
            <person name="Zhao R."/>
            <person name="Ma Y."/>
            <person name="He Y."/>
            <person name="Di Z."/>
            <person name="Wu Y.-L."/>
            <person name="Cao Z.-J."/>
            <person name="Li W.-X."/>
        </authorList>
    </citation>
    <scope>NUCLEOTIDE SEQUENCE [MRNA]</scope>
    <source>
        <strain>Yunnan</strain>
        <tissue>Venom gland</tissue>
    </source>
</reference>